<evidence type="ECO:0000305" key="1"/>
<organism>
    <name type="scientific">Escherichia coli</name>
    <dbReference type="NCBI Taxonomy" id="562"/>
    <lineage>
        <taxon>Bacteria</taxon>
        <taxon>Pseudomonadati</taxon>
        <taxon>Pseudomonadota</taxon>
        <taxon>Gammaproteobacteria</taxon>
        <taxon>Enterobacterales</taxon>
        <taxon>Enterobacteriaceae</taxon>
        <taxon>Escherichia</taxon>
    </lineage>
</organism>
<name>MBED_ECOLX</name>
<reference key="1">
    <citation type="journal article" date="1989" name="Mol. Gen. Genet.">
        <title>Characterization of the ColE1 mobilization region and its protein products.</title>
        <authorList>
            <person name="Boyd A.C."/>
            <person name="Archer J.A.K."/>
            <person name="Sherratt D.J."/>
        </authorList>
    </citation>
    <scope>NUCLEOTIDE SEQUENCE [GENOMIC DNA]</scope>
</reference>
<accession>P13660</accession>
<proteinExistence type="predicted"/>
<gene>
    <name type="primary">mbeD</name>
</gene>
<geneLocation type="plasmid">
    <name>ColE1</name>
</geneLocation>
<protein>
    <recommendedName>
        <fullName>Mobilization protein MbeD</fullName>
    </recommendedName>
</protein>
<feature type="chain" id="PRO_0000068403" description="Mobilization protein MbeD">
    <location>
        <begin position="1"/>
        <end position="77"/>
    </location>
</feature>
<dbReference type="EMBL" id="X15873">
    <property type="protein sequence ID" value="CAA33885.1"/>
    <property type="molecule type" value="Genomic_DNA"/>
</dbReference>
<dbReference type="PIR" id="JQ0392">
    <property type="entry name" value="JQ0392"/>
</dbReference>
<dbReference type="RefSeq" id="NP_040372.1">
    <property type="nucleotide sequence ID" value="NC_001371.1"/>
</dbReference>
<dbReference type="RefSeq" id="WP_000137445.1">
    <property type="nucleotide sequence ID" value="NZ_WXYY01000009.1"/>
</dbReference>
<dbReference type="SMR" id="P13660"/>
<dbReference type="InterPro" id="IPR006983">
    <property type="entry name" value="MbeD_MobD"/>
</dbReference>
<dbReference type="NCBIfam" id="NF033829">
    <property type="entry name" value="plas_excl_MbeD"/>
    <property type="match status" value="1"/>
</dbReference>
<dbReference type="Pfam" id="PF04899">
    <property type="entry name" value="MbeD_MobD"/>
    <property type="match status" value="1"/>
</dbReference>
<comment type="function">
    <text>This protein is essential to promote the specific transfer of the plasmid in the presence of conjugative plasmids.</text>
</comment>
<comment type="similarity">
    <text evidence="1">To E.coli MbaD and MbkD.</text>
</comment>
<keyword id="KW-0184">Conjugation</keyword>
<keyword id="KW-0499">Mobility protein</keyword>
<keyword id="KW-0614">Plasmid</keyword>
<sequence length="77" mass="9361">MTELETHLLNALEQLQQDYMQRLSEWESAFVELQKMFSLTQRDNAMLNERVMQLSQQVQHLSEQTERLSQLYSENWR</sequence>